<keyword id="KW-0067">ATP-binding</keyword>
<keyword id="KW-0418">Kinase</keyword>
<keyword id="KW-0460">Magnesium</keyword>
<keyword id="KW-0479">Metal-binding</keyword>
<keyword id="KW-0511">Multifunctional enzyme</keyword>
<keyword id="KW-0547">Nucleotide-binding</keyword>
<keyword id="KW-1185">Reference proteome</keyword>
<keyword id="KW-0723">Serine/threonine-protein kinase</keyword>
<keyword id="KW-0808">Transferase</keyword>
<accession>Q145W4</accession>
<organism>
    <name type="scientific">Paraburkholderia xenovorans (strain LB400)</name>
    <dbReference type="NCBI Taxonomy" id="266265"/>
    <lineage>
        <taxon>Bacteria</taxon>
        <taxon>Pseudomonadati</taxon>
        <taxon>Pseudomonadota</taxon>
        <taxon>Betaproteobacteria</taxon>
        <taxon>Burkholderiales</taxon>
        <taxon>Burkholderiaceae</taxon>
        <taxon>Paraburkholderia</taxon>
    </lineage>
</organism>
<evidence type="ECO:0000255" key="1">
    <source>
        <dbReference type="HAMAP-Rule" id="MF_01249"/>
    </source>
</evidence>
<protein>
    <recommendedName>
        <fullName evidence="1">HPr kinase/phosphorylase</fullName>
        <shortName evidence="1">HPrK/P</shortName>
        <ecNumber evidence="1">2.7.11.-</ecNumber>
        <ecNumber evidence="1">2.7.4.-</ecNumber>
    </recommendedName>
    <alternativeName>
        <fullName evidence="1">HPr(Ser) kinase/phosphorylase</fullName>
    </alternativeName>
</protein>
<comment type="function">
    <text evidence="1">Catalyzes the ATP- as well as the pyrophosphate-dependent phosphorylation of a specific serine residue in HPr, a phosphocarrier protein of the phosphoenolpyruvate-dependent sugar phosphotransferase system (PTS). HprK/P also catalyzes the pyrophosphate-producing, inorganic phosphate-dependent dephosphorylation (phosphorolysis) of seryl-phosphorylated HPr (P-Ser-HPr).</text>
</comment>
<comment type="catalytic activity">
    <reaction evidence="1">
        <text>[HPr protein]-L-serine + ATP = [HPr protein]-O-phospho-L-serine + ADP + H(+)</text>
        <dbReference type="Rhea" id="RHEA:46600"/>
        <dbReference type="Rhea" id="RHEA-COMP:11602"/>
        <dbReference type="Rhea" id="RHEA-COMP:11603"/>
        <dbReference type="ChEBI" id="CHEBI:15378"/>
        <dbReference type="ChEBI" id="CHEBI:29999"/>
        <dbReference type="ChEBI" id="CHEBI:30616"/>
        <dbReference type="ChEBI" id="CHEBI:83421"/>
        <dbReference type="ChEBI" id="CHEBI:456216"/>
    </reaction>
</comment>
<comment type="catalytic activity">
    <reaction evidence="1">
        <text>[HPr protein]-O-phospho-L-serine + phosphate + H(+) = [HPr protein]-L-serine + diphosphate</text>
        <dbReference type="Rhea" id="RHEA:46604"/>
        <dbReference type="Rhea" id="RHEA-COMP:11602"/>
        <dbReference type="Rhea" id="RHEA-COMP:11603"/>
        <dbReference type="ChEBI" id="CHEBI:15378"/>
        <dbReference type="ChEBI" id="CHEBI:29999"/>
        <dbReference type="ChEBI" id="CHEBI:33019"/>
        <dbReference type="ChEBI" id="CHEBI:43474"/>
        <dbReference type="ChEBI" id="CHEBI:83421"/>
    </reaction>
</comment>
<comment type="cofactor">
    <cofactor evidence="1">
        <name>Mg(2+)</name>
        <dbReference type="ChEBI" id="CHEBI:18420"/>
    </cofactor>
</comment>
<comment type="subunit">
    <text evidence="1">Homohexamer.</text>
</comment>
<comment type="domain">
    <text evidence="1">The Walker A ATP-binding motif also binds Pi and PPi.</text>
</comment>
<comment type="miscellaneous">
    <text evidence="1">Both phosphorylation and phosphorolysis are carried out by the same active site and suggest a common mechanism for both reactions.</text>
</comment>
<comment type="similarity">
    <text evidence="1">Belongs to the HPrK/P family.</text>
</comment>
<feature type="chain" id="PRO_1000067141" description="HPr kinase/phosphorylase">
    <location>
        <begin position="1"/>
        <end position="322"/>
    </location>
</feature>
<feature type="region of interest" description="Important for the catalytic mechanism of both phosphorylation and dephosphorylation" evidence="1">
    <location>
        <begin position="209"/>
        <end position="218"/>
    </location>
</feature>
<feature type="region of interest" description="Important for the catalytic mechanism of dephosphorylation" evidence="1">
    <location>
        <begin position="271"/>
        <end position="276"/>
    </location>
</feature>
<feature type="active site" evidence="1">
    <location>
        <position position="146"/>
    </location>
</feature>
<feature type="active site" evidence="1">
    <location>
        <position position="167"/>
    </location>
</feature>
<feature type="active site" description="Proton acceptor; for phosphorylation activity. Proton donor; for dephosphorylation activity" evidence="1">
    <location>
        <position position="185"/>
    </location>
</feature>
<feature type="active site" evidence="1">
    <location>
        <position position="250"/>
    </location>
</feature>
<feature type="binding site" evidence="1">
    <location>
        <begin position="161"/>
        <end position="168"/>
    </location>
    <ligand>
        <name>ATP</name>
        <dbReference type="ChEBI" id="CHEBI:30616"/>
    </ligand>
</feature>
<feature type="binding site" evidence="1">
    <location>
        <position position="168"/>
    </location>
    <ligand>
        <name>Mg(2+)</name>
        <dbReference type="ChEBI" id="CHEBI:18420"/>
    </ligand>
</feature>
<feature type="binding site" evidence="1">
    <location>
        <position position="210"/>
    </location>
    <ligand>
        <name>Mg(2+)</name>
        <dbReference type="ChEBI" id="CHEBI:18420"/>
    </ligand>
</feature>
<dbReference type="EC" id="2.7.11.-" evidence="1"/>
<dbReference type="EC" id="2.7.4.-" evidence="1"/>
<dbReference type="EMBL" id="CP000270">
    <property type="protein sequence ID" value="ABE28875.1"/>
    <property type="molecule type" value="Genomic_DNA"/>
</dbReference>
<dbReference type="RefSeq" id="WP_011486706.1">
    <property type="nucleotide sequence ID" value="NC_007951.1"/>
</dbReference>
<dbReference type="SMR" id="Q145W4"/>
<dbReference type="STRING" id="266265.Bxe_A4125"/>
<dbReference type="KEGG" id="bxb:DR64_1801"/>
<dbReference type="KEGG" id="bxe:Bxe_A4125"/>
<dbReference type="PATRIC" id="fig|266265.5.peg.357"/>
<dbReference type="eggNOG" id="COG1493">
    <property type="taxonomic scope" value="Bacteria"/>
</dbReference>
<dbReference type="OrthoDB" id="9778803at2"/>
<dbReference type="Proteomes" id="UP000001817">
    <property type="component" value="Chromosome 1"/>
</dbReference>
<dbReference type="GO" id="GO:0005524">
    <property type="term" value="F:ATP binding"/>
    <property type="evidence" value="ECO:0007669"/>
    <property type="project" value="UniProtKB-UniRule"/>
</dbReference>
<dbReference type="GO" id="GO:0000287">
    <property type="term" value="F:magnesium ion binding"/>
    <property type="evidence" value="ECO:0007669"/>
    <property type="project" value="UniProtKB-UniRule"/>
</dbReference>
<dbReference type="GO" id="GO:0000155">
    <property type="term" value="F:phosphorelay sensor kinase activity"/>
    <property type="evidence" value="ECO:0007669"/>
    <property type="project" value="InterPro"/>
</dbReference>
<dbReference type="GO" id="GO:0004674">
    <property type="term" value="F:protein serine/threonine kinase activity"/>
    <property type="evidence" value="ECO:0007669"/>
    <property type="project" value="UniProtKB-KW"/>
</dbReference>
<dbReference type="GO" id="GO:0004712">
    <property type="term" value="F:protein serine/threonine/tyrosine kinase activity"/>
    <property type="evidence" value="ECO:0007669"/>
    <property type="project" value="UniProtKB-UniRule"/>
</dbReference>
<dbReference type="GO" id="GO:0006109">
    <property type="term" value="P:regulation of carbohydrate metabolic process"/>
    <property type="evidence" value="ECO:0007669"/>
    <property type="project" value="UniProtKB-UniRule"/>
</dbReference>
<dbReference type="CDD" id="cd01918">
    <property type="entry name" value="HprK_C"/>
    <property type="match status" value="1"/>
</dbReference>
<dbReference type="FunFam" id="3.40.50.300:FF:000174">
    <property type="entry name" value="HPr kinase/phosphorylase"/>
    <property type="match status" value="1"/>
</dbReference>
<dbReference type="Gene3D" id="3.40.1390.20">
    <property type="entry name" value="HprK N-terminal domain-like"/>
    <property type="match status" value="1"/>
</dbReference>
<dbReference type="Gene3D" id="3.40.50.300">
    <property type="entry name" value="P-loop containing nucleotide triphosphate hydrolases"/>
    <property type="match status" value="1"/>
</dbReference>
<dbReference type="HAMAP" id="MF_01249">
    <property type="entry name" value="HPr_kinase"/>
    <property type="match status" value="1"/>
</dbReference>
<dbReference type="InterPro" id="IPR003755">
    <property type="entry name" value="HPr(Ser)_kin/Pase"/>
</dbReference>
<dbReference type="InterPro" id="IPR011104">
    <property type="entry name" value="Hpr_kin/Pase_C"/>
</dbReference>
<dbReference type="InterPro" id="IPR011126">
    <property type="entry name" value="Hpr_kin/Pase_Hpr_N"/>
</dbReference>
<dbReference type="InterPro" id="IPR027417">
    <property type="entry name" value="P-loop_NTPase"/>
</dbReference>
<dbReference type="InterPro" id="IPR028979">
    <property type="entry name" value="Ser_kin/Pase_Hpr-like_N_sf"/>
</dbReference>
<dbReference type="NCBIfam" id="TIGR00679">
    <property type="entry name" value="hpr-ser"/>
    <property type="match status" value="1"/>
</dbReference>
<dbReference type="PANTHER" id="PTHR30305:SF1">
    <property type="entry name" value="HPR KINASE_PHOSPHORYLASE"/>
    <property type="match status" value="1"/>
</dbReference>
<dbReference type="PANTHER" id="PTHR30305">
    <property type="entry name" value="PROTEIN YJDM-RELATED"/>
    <property type="match status" value="1"/>
</dbReference>
<dbReference type="Pfam" id="PF07475">
    <property type="entry name" value="Hpr_kinase_C"/>
    <property type="match status" value="1"/>
</dbReference>
<dbReference type="Pfam" id="PF02603">
    <property type="entry name" value="Hpr_kinase_N"/>
    <property type="match status" value="1"/>
</dbReference>
<dbReference type="SUPFAM" id="SSF75138">
    <property type="entry name" value="HprK N-terminal domain-like"/>
    <property type="match status" value="1"/>
</dbReference>
<dbReference type="SUPFAM" id="SSF53795">
    <property type="entry name" value="PEP carboxykinase-like"/>
    <property type="match status" value="1"/>
</dbReference>
<proteinExistence type="inferred from homology"/>
<gene>
    <name evidence="1" type="primary">hprK</name>
    <name type="ordered locus">Bxeno_A0337</name>
    <name type="ORF">Bxe_A4125</name>
</gene>
<reference key="1">
    <citation type="journal article" date="2006" name="Proc. Natl. Acad. Sci. U.S.A.">
        <title>Burkholderia xenovorans LB400 harbors a multi-replicon, 9.73-Mbp genome shaped for versatility.</title>
        <authorList>
            <person name="Chain P.S.G."/>
            <person name="Denef V.J."/>
            <person name="Konstantinidis K.T."/>
            <person name="Vergez L.M."/>
            <person name="Agullo L."/>
            <person name="Reyes V.L."/>
            <person name="Hauser L."/>
            <person name="Cordova M."/>
            <person name="Gomez L."/>
            <person name="Gonzalez M."/>
            <person name="Land M."/>
            <person name="Lao V."/>
            <person name="Larimer F."/>
            <person name="LiPuma J.J."/>
            <person name="Mahenthiralingam E."/>
            <person name="Malfatti S.A."/>
            <person name="Marx C.J."/>
            <person name="Parnell J.J."/>
            <person name="Ramette A."/>
            <person name="Richardson P."/>
            <person name="Seeger M."/>
            <person name="Smith D."/>
            <person name="Spilker T."/>
            <person name="Sul W.J."/>
            <person name="Tsoi T.V."/>
            <person name="Ulrich L.E."/>
            <person name="Zhulin I.B."/>
            <person name="Tiedje J.M."/>
        </authorList>
    </citation>
    <scope>NUCLEOTIDE SEQUENCE [LARGE SCALE GENOMIC DNA]</scope>
    <source>
        <strain>LB400</strain>
    </source>
</reference>
<sequence>MDTSSINAQSIFDDNAATLKLSWLTGHEGWERGFSSESVANATSSADLVGHLNLIHPNRIQVLGDAEIDYYKRQTDEDRSRHMAELIALEPPFLVVAGGVPAPPELVLRCTRSSTPLFTTPMSAAAVIDSLRLYMSRILAPRATLHGVFLDILGMGVLLTGDSGLGKSELGLELISRGHGLVADDAVDFVRLGPDFVEGRCPPLLQNLLEVRGLGLLDIKTIFGETAVRRKMKLKLIVQLVRRPDGEFQRLPLESQTVDVLGLPISKVTIQVAAGRNLAVLVEAAVRNTILQLRGIDTLRDFMDRQRLAMQDPDSQFPGKLI</sequence>
<name>HPRK_PARXL</name>